<protein>
    <recommendedName>
        <fullName evidence="1">Ecotin</fullName>
    </recommendedName>
</protein>
<keyword id="KW-1015">Disulfide bond</keyword>
<keyword id="KW-0574">Periplasm</keyword>
<keyword id="KW-0646">Protease inhibitor</keyword>
<keyword id="KW-0722">Serine protease inhibitor</keyword>
<keyword id="KW-0732">Signal</keyword>
<proteinExistence type="inferred from homology"/>
<name>ECOT_ECOHS</name>
<accession>A8A271</accession>
<evidence type="ECO:0000255" key="1">
    <source>
        <dbReference type="HAMAP-Rule" id="MF_00706"/>
    </source>
</evidence>
<dbReference type="EMBL" id="CP000802">
    <property type="protein sequence ID" value="ABV06625.1"/>
    <property type="molecule type" value="Genomic_DNA"/>
</dbReference>
<dbReference type="SMR" id="A8A271"/>
<dbReference type="MEROPS" id="I11.001"/>
<dbReference type="KEGG" id="ecx:EcHS_A2347"/>
<dbReference type="HOGENOM" id="CLU_111565_0_0_6"/>
<dbReference type="GO" id="GO:0042597">
    <property type="term" value="C:periplasmic space"/>
    <property type="evidence" value="ECO:0007669"/>
    <property type="project" value="UniProtKB-SubCell"/>
</dbReference>
<dbReference type="GO" id="GO:0004867">
    <property type="term" value="F:serine-type endopeptidase inhibitor activity"/>
    <property type="evidence" value="ECO:0007669"/>
    <property type="project" value="UniProtKB-UniRule"/>
</dbReference>
<dbReference type="CDD" id="cd00242">
    <property type="entry name" value="Ecotin"/>
    <property type="match status" value="1"/>
</dbReference>
<dbReference type="FunFam" id="2.60.40.550:FF:000001">
    <property type="entry name" value="Ecotin"/>
    <property type="match status" value="1"/>
</dbReference>
<dbReference type="FunFam" id="4.10.1230.10:FF:000001">
    <property type="entry name" value="Ecotin"/>
    <property type="match status" value="1"/>
</dbReference>
<dbReference type="Gene3D" id="2.60.40.550">
    <property type="entry name" value="Ecotin"/>
    <property type="match status" value="1"/>
</dbReference>
<dbReference type="Gene3D" id="4.10.1230.10">
    <property type="entry name" value="Ecotin, trypsin inhibitor"/>
    <property type="match status" value="1"/>
</dbReference>
<dbReference type="HAMAP" id="MF_00706">
    <property type="entry name" value="Ecotin"/>
    <property type="match status" value="1"/>
</dbReference>
<dbReference type="InterPro" id="IPR027438">
    <property type="entry name" value="Ecotin_C"/>
</dbReference>
<dbReference type="InterPro" id="IPR036198">
    <property type="entry name" value="Ecotin_sf"/>
</dbReference>
<dbReference type="InterPro" id="IPR005658">
    <property type="entry name" value="Prot_inh_ecotin"/>
</dbReference>
<dbReference type="InterPro" id="IPR023084">
    <property type="entry name" value="Prot_inh_ecotin_gammaproteobac"/>
</dbReference>
<dbReference type="NCBIfam" id="NF002987">
    <property type="entry name" value="PRK03719.1"/>
    <property type="match status" value="1"/>
</dbReference>
<dbReference type="PANTHER" id="PTHR35890">
    <property type="match status" value="1"/>
</dbReference>
<dbReference type="PANTHER" id="PTHR35890:SF3">
    <property type="entry name" value="ECOTIN"/>
    <property type="match status" value="1"/>
</dbReference>
<dbReference type="Pfam" id="PF03974">
    <property type="entry name" value="Ecotin"/>
    <property type="match status" value="1"/>
</dbReference>
<dbReference type="PIRSF" id="PIRSF006865">
    <property type="entry name" value="Prot_inh_ecotin"/>
    <property type="match status" value="1"/>
</dbReference>
<dbReference type="SUPFAM" id="SSF49772">
    <property type="entry name" value="Ecotin, trypsin inhibitor"/>
    <property type="match status" value="1"/>
</dbReference>
<feature type="signal peptide" evidence="1">
    <location>
        <begin position="1"/>
        <end position="20"/>
    </location>
</feature>
<feature type="chain" id="PRO_1000062061" description="Ecotin">
    <location>
        <begin position="21"/>
        <end position="162"/>
    </location>
</feature>
<feature type="site" description="Reactive bond" evidence="1">
    <location>
        <begin position="104"/>
        <end position="105"/>
    </location>
</feature>
<feature type="disulfide bond" evidence="1">
    <location>
        <begin position="70"/>
        <end position="107"/>
    </location>
</feature>
<gene>
    <name evidence="1" type="primary">eco</name>
    <name type="ordered locus">EcHS_A2347</name>
</gene>
<reference key="1">
    <citation type="journal article" date="2008" name="J. Bacteriol.">
        <title>The pangenome structure of Escherichia coli: comparative genomic analysis of E. coli commensal and pathogenic isolates.</title>
        <authorList>
            <person name="Rasko D.A."/>
            <person name="Rosovitz M.J."/>
            <person name="Myers G.S.A."/>
            <person name="Mongodin E.F."/>
            <person name="Fricke W.F."/>
            <person name="Gajer P."/>
            <person name="Crabtree J."/>
            <person name="Sebaihia M."/>
            <person name="Thomson N.R."/>
            <person name="Chaudhuri R."/>
            <person name="Henderson I.R."/>
            <person name="Sperandio V."/>
            <person name="Ravel J."/>
        </authorList>
    </citation>
    <scope>NUCLEOTIDE SEQUENCE [LARGE SCALE GENOMIC DNA]</scope>
    <source>
        <strain>HS</strain>
    </source>
</reference>
<organism>
    <name type="scientific">Escherichia coli O9:H4 (strain HS)</name>
    <dbReference type="NCBI Taxonomy" id="331112"/>
    <lineage>
        <taxon>Bacteria</taxon>
        <taxon>Pseudomonadati</taxon>
        <taxon>Pseudomonadota</taxon>
        <taxon>Gammaproteobacteria</taxon>
        <taxon>Enterobacterales</taxon>
        <taxon>Enterobacteriaceae</taxon>
        <taxon>Escherichia</taxon>
    </lineage>
</organism>
<sequence length="162" mass="18192">MKTILPAVLFAAFATTSAWAAESVQPLEKIAPYPQAEKGMKRQVIQLTPQEDESTLKVELLIGQTLEVDCNLHRLGGKLENKTLEGWGYDYYVFDKVSSPVSTMMACPDGKKEKKFVTAYLGDAGMLRYNSKLPIVVYTPDNVDVKYRVWKAEEKIDNAVVR</sequence>
<comment type="function">
    <text evidence="1">General inhibitor of pancreatic serine proteases: inhibits chymotrypsin, trypsin, elastases, factor X, kallikrein as well as a variety of other proteases.</text>
</comment>
<comment type="subunit">
    <text evidence="1">Homodimer.</text>
</comment>
<comment type="subcellular location">
    <subcellularLocation>
        <location evidence="1">Periplasm</location>
    </subcellularLocation>
</comment>
<comment type="similarity">
    <text evidence="1">Belongs to the protease inhibitor I11 (ecotin) family.</text>
</comment>